<feature type="chain" id="PRO_0000430608" description="Glycerophosphodiester phosphodiesterase GDPD2">
    <location>
        <begin position="1"/>
        <end position="374"/>
    </location>
</feature>
<feature type="domain" description="GP-PDE" evidence="2">
    <location>
        <begin position="38"/>
        <end position="326"/>
    </location>
</feature>
<feature type="region of interest" description="Disordered" evidence="3">
    <location>
        <begin position="330"/>
        <end position="349"/>
    </location>
</feature>
<feature type="compositionally biased region" description="Pro residues" evidence="3">
    <location>
        <begin position="332"/>
        <end position="342"/>
    </location>
</feature>
<gene>
    <name evidence="5" type="primary">GDPD2</name>
    <name evidence="7" type="ordered locus">At5g41080</name>
    <name evidence="8" type="ORF">MEE6.15</name>
</gene>
<organism>
    <name type="scientific">Arabidopsis thaliana</name>
    <name type="common">Mouse-ear cress</name>
    <dbReference type="NCBI Taxonomy" id="3702"/>
    <lineage>
        <taxon>Eukaryota</taxon>
        <taxon>Viridiplantae</taxon>
        <taxon>Streptophyta</taxon>
        <taxon>Embryophyta</taxon>
        <taxon>Tracheophyta</taxon>
        <taxon>Spermatophyta</taxon>
        <taxon>Magnoliopsida</taxon>
        <taxon>eudicotyledons</taxon>
        <taxon>Gunneridae</taxon>
        <taxon>Pentapetalae</taxon>
        <taxon>rosids</taxon>
        <taxon>malvids</taxon>
        <taxon>Brassicales</taxon>
        <taxon>Brassicaceae</taxon>
        <taxon>Camelineae</taxon>
        <taxon>Arabidopsis</taxon>
    </lineage>
</organism>
<sequence length="374" mass="42016">MALRTVLVSDVPSLPDSVYGLSEGLELSKPTSFRLPGFSVIGHRGIGMNVLQSSDRRARGVKENSILSFNSAAKYPIDFIEFDVQVTKDDCPVIFHDDFIYSEENGIVNESRVTDLSLSEFLLYGPQKETEKIGKTLMRKSKEGKVLKWDVDLDDSLCTLQEAFEQVEQTLGFNIELKFDDQTVYEREFLVHILRSVLQVVSNYAKDRPVIFSSFQPDAAKLVRELQSTYPVFFLTDAGNEIHNDERRNSLEEAIQVCLEGGLQGIVSEVKGVFRNPAAISKIKESNLSLLTYGKLNNVGEAVYMQYVMGIDGVIVDFVEEIIESTTRMMIRPPPSSSPLPSPSKDDDVAITRPEFSQKEISFLLKLLSQLIQH</sequence>
<reference key="1">
    <citation type="journal article" date="1998" name="DNA Res.">
        <title>Structural analysis of Arabidopsis thaliana chromosome 5. IV. Sequence features of the regions of 1,456,315 bp covered by nineteen physically assigned P1 and TAC clones.</title>
        <authorList>
            <person name="Sato S."/>
            <person name="Kaneko T."/>
            <person name="Kotani H."/>
            <person name="Nakamura Y."/>
            <person name="Asamizu E."/>
            <person name="Miyajima N."/>
            <person name="Tabata S."/>
        </authorList>
    </citation>
    <scope>NUCLEOTIDE SEQUENCE [LARGE SCALE GENOMIC DNA]</scope>
    <source>
        <strain>cv. Columbia</strain>
    </source>
</reference>
<reference key="2">
    <citation type="journal article" date="2017" name="Plant J.">
        <title>Araport11: a complete reannotation of the Arabidopsis thaliana reference genome.</title>
        <authorList>
            <person name="Cheng C.Y."/>
            <person name="Krishnakumar V."/>
            <person name="Chan A.P."/>
            <person name="Thibaud-Nissen F."/>
            <person name="Schobel S."/>
            <person name="Town C.D."/>
        </authorList>
    </citation>
    <scope>GENOME REANNOTATION</scope>
    <source>
        <strain>cv. Columbia</strain>
    </source>
</reference>
<reference key="3">
    <citation type="journal article" date="2002" name="Science">
        <title>Functional annotation of a full-length Arabidopsis cDNA collection.</title>
        <authorList>
            <person name="Seki M."/>
            <person name="Narusaka M."/>
            <person name="Kamiya A."/>
            <person name="Ishida J."/>
            <person name="Satou M."/>
            <person name="Sakurai T."/>
            <person name="Nakajima M."/>
            <person name="Enju A."/>
            <person name="Akiyama K."/>
            <person name="Oono Y."/>
            <person name="Muramatsu M."/>
            <person name="Hayashizaki Y."/>
            <person name="Kawai J."/>
            <person name="Carninci P."/>
            <person name="Itoh M."/>
            <person name="Ishii Y."/>
            <person name="Arakawa T."/>
            <person name="Shibata K."/>
            <person name="Shinagawa A."/>
            <person name="Shinozaki K."/>
        </authorList>
    </citation>
    <scope>NUCLEOTIDE SEQUENCE [LARGE SCALE MRNA]</scope>
    <source>
        <strain>cv. Columbia</strain>
    </source>
</reference>
<reference key="4">
    <citation type="submission" date="2007-01" db="EMBL/GenBank/DDBJ databases">
        <title>Arabidopsis ORF clones.</title>
        <authorList>
            <person name="Bautista V.R."/>
            <person name="Kim C.J."/>
            <person name="Chen H."/>
            <person name="Wu S.Y."/>
            <person name="De Los Reyes C."/>
            <person name="Ecker J.R."/>
        </authorList>
    </citation>
    <scope>NUCLEOTIDE SEQUENCE [LARGE SCALE MRNA]</scope>
    <source>
        <strain>cv. Columbia</strain>
    </source>
</reference>
<reference key="5">
    <citation type="journal article" date="2011" name="Plant J.">
        <title>Characterization of the Arabidopsis glycerophosphodiester phosphodiesterase (GDPD) family reveals a role of the plastid-localized AtGDPD1 in maintaining cellular phosphate homeostasis under phosphate starvation.</title>
        <authorList>
            <person name="Cheng Y."/>
            <person name="Zhou W."/>
            <person name="El Sheery N.I."/>
            <person name="Peters C."/>
            <person name="Li M."/>
            <person name="Wang X."/>
            <person name="Huang J."/>
        </authorList>
    </citation>
    <scope>TISSUE SPECIFICITY</scope>
    <scope>INDUCTION</scope>
    <scope>GENE FAMILY</scope>
    <scope>NOMENCLATURE</scope>
</reference>
<accession>Q9FLM1</accession>
<proteinExistence type="evidence at transcript level"/>
<evidence type="ECO:0000250" key="1">
    <source>
        <dbReference type="UniProtKB" id="Q9SGA2"/>
    </source>
</evidence>
<evidence type="ECO:0000255" key="2"/>
<evidence type="ECO:0000256" key="3">
    <source>
        <dbReference type="SAM" id="MobiDB-lite"/>
    </source>
</evidence>
<evidence type="ECO:0000269" key="4">
    <source>
    </source>
</evidence>
<evidence type="ECO:0000303" key="5">
    <source>
    </source>
</evidence>
<evidence type="ECO:0000305" key="6"/>
<evidence type="ECO:0000312" key="7">
    <source>
        <dbReference type="Araport" id="AT5G41080"/>
    </source>
</evidence>
<evidence type="ECO:0000312" key="8">
    <source>
        <dbReference type="EMBL" id="BAB09710.1"/>
    </source>
</evidence>
<comment type="catalytic activity">
    <reaction evidence="1">
        <text>a sn-glycero-3-phosphodiester + H2O = an alcohol + sn-glycerol 3-phosphate + H(+)</text>
        <dbReference type="Rhea" id="RHEA:12969"/>
        <dbReference type="ChEBI" id="CHEBI:15377"/>
        <dbReference type="ChEBI" id="CHEBI:15378"/>
        <dbReference type="ChEBI" id="CHEBI:30879"/>
        <dbReference type="ChEBI" id="CHEBI:57597"/>
        <dbReference type="ChEBI" id="CHEBI:83408"/>
        <dbReference type="EC" id="3.1.4.46"/>
    </reaction>
</comment>
<comment type="alternative products">
    <event type="alternative splicing"/>
    <isoform>
        <id>Q9FLM1-1</id>
        <name>1</name>
        <sequence type="displayed"/>
    </isoform>
    <text>A number of isoforms are produced. According to EST sequences.</text>
</comment>
<comment type="tissue specificity">
    <text evidence="4">Expressed in roots, shoots, flowers and siliques.</text>
</comment>
<comment type="induction">
    <text evidence="4">By phosphate starvation.</text>
</comment>
<comment type="similarity">
    <text evidence="6">Belongs to the glycerophosphoryl diester phosphodiesterase family.</text>
</comment>
<keyword id="KW-0025">Alternative splicing</keyword>
<keyword id="KW-0319">Glycerol metabolism</keyword>
<keyword id="KW-0378">Hydrolase</keyword>
<keyword id="KW-1185">Reference proteome</keyword>
<protein>
    <recommendedName>
        <fullName evidence="6">Glycerophosphodiester phosphodiesterase GDPD2</fullName>
        <ecNumber evidence="1">3.1.4.46</ecNumber>
    </recommendedName>
    <alternativeName>
        <fullName evidence="5">Glycerophosphodiester phosphodiesterase 2</fullName>
        <shortName evidence="5">AtGDPD2</shortName>
    </alternativeName>
</protein>
<name>GDPD2_ARATH</name>
<dbReference type="EC" id="3.1.4.46" evidence="1"/>
<dbReference type="EMBL" id="AB010072">
    <property type="protein sequence ID" value="BAB09710.1"/>
    <property type="molecule type" value="Genomic_DNA"/>
</dbReference>
<dbReference type="EMBL" id="CP002688">
    <property type="protein sequence ID" value="AED94635.1"/>
    <property type="molecule type" value="Genomic_DNA"/>
</dbReference>
<dbReference type="EMBL" id="AK117378">
    <property type="protein sequence ID" value="BAC42047.1"/>
    <property type="molecule type" value="mRNA"/>
</dbReference>
<dbReference type="EMBL" id="BT030021">
    <property type="protein sequence ID" value="ABN04759.1"/>
    <property type="molecule type" value="mRNA"/>
</dbReference>
<dbReference type="RefSeq" id="NP_198924.1">
    <molecule id="Q9FLM1-1"/>
    <property type="nucleotide sequence ID" value="NM_123473.4"/>
</dbReference>
<dbReference type="SMR" id="Q9FLM1"/>
<dbReference type="STRING" id="3702.Q9FLM1"/>
<dbReference type="PaxDb" id="3702-AT5G41080.1"/>
<dbReference type="ProteomicsDB" id="222000">
    <molecule id="Q9FLM1-1"/>
</dbReference>
<dbReference type="DNASU" id="834110"/>
<dbReference type="EnsemblPlants" id="AT5G41080.1">
    <molecule id="Q9FLM1-1"/>
    <property type="protein sequence ID" value="AT5G41080.1"/>
    <property type="gene ID" value="AT5G41080"/>
</dbReference>
<dbReference type="GeneID" id="834110"/>
<dbReference type="Gramene" id="AT5G41080.1">
    <molecule id="Q9FLM1-1"/>
    <property type="protein sequence ID" value="AT5G41080.1"/>
    <property type="gene ID" value="AT5G41080"/>
</dbReference>
<dbReference type="KEGG" id="ath:AT5G41080"/>
<dbReference type="Araport" id="AT5G41080"/>
<dbReference type="TAIR" id="AT5G41080">
    <property type="gene designation" value="GDPD2"/>
</dbReference>
<dbReference type="eggNOG" id="KOG2421">
    <property type="taxonomic scope" value="Eukaryota"/>
</dbReference>
<dbReference type="InParanoid" id="Q9FLM1"/>
<dbReference type="OMA" id="KMQSTYP"/>
<dbReference type="OrthoDB" id="1058301at2759"/>
<dbReference type="PhylomeDB" id="Q9FLM1"/>
<dbReference type="PRO" id="PR:Q9FLM1"/>
<dbReference type="Proteomes" id="UP000006548">
    <property type="component" value="Chromosome 5"/>
</dbReference>
<dbReference type="ExpressionAtlas" id="Q9FLM1">
    <property type="expression patterns" value="baseline and differential"/>
</dbReference>
<dbReference type="GO" id="GO:0008889">
    <property type="term" value="F:glycerophosphodiester phosphodiesterase activity"/>
    <property type="evidence" value="ECO:0007669"/>
    <property type="project" value="UniProtKB-EC"/>
</dbReference>
<dbReference type="GO" id="GO:0071456">
    <property type="term" value="P:cellular response to hypoxia"/>
    <property type="evidence" value="ECO:0007007"/>
    <property type="project" value="TAIR"/>
</dbReference>
<dbReference type="GO" id="GO:0006071">
    <property type="term" value="P:glycerol metabolic process"/>
    <property type="evidence" value="ECO:0007669"/>
    <property type="project" value="UniProtKB-KW"/>
</dbReference>
<dbReference type="GO" id="GO:0006629">
    <property type="term" value="P:lipid metabolic process"/>
    <property type="evidence" value="ECO:0007669"/>
    <property type="project" value="InterPro"/>
</dbReference>
<dbReference type="CDD" id="cd08605">
    <property type="entry name" value="GDPD_GDE5_like_1_plant"/>
    <property type="match status" value="1"/>
</dbReference>
<dbReference type="FunFam" id="3.20.20.190:FF:000034">
    <property type="entry name" value="Glycerophosphodiester phosphodiesterase GDPD2"/>
    <property type="match status" value="1"/>
</dbReference>
<dbReference type="Gene3D" id="3.20.20.190">
    <property type="entry name" value="Phosphatidylinositol (PI) phosphodiesterase"/>
    <property type="match status" value="1"/>
</dbReference>
<dbReference type="InterPro" id="IPR051578">
    <property type="entry name" value="GDPD"/>
</dbReference>
<dbReference type="InterPro" id="IPR030395">
    <property type="entry name" value="GP_PDE_dom"/>
</dbReference>
<dbReference type="InterPro" id="IPR017946">
    <property type="entry name" value="PLC-like_Pdiesterase_TIM-brl"/>
</dbReference>
<dbReference type="PANTHER" id="PTHR22958:SF29">
    <property type="entry name" value="GLYCEROPHOSPHODIESTER PHOSPHODIESTERASE GDPD2"/>
    <property type="match status" value="1"/>
</dbReference>
<dbReference type="PANTHER" id="PTHR22958">
    <property type="entry name" value="GLYCEROPHOSPHORYL DIESTER PHOSPHODIESTERASE"/>
    <property type="match status" value="1"/>
</dbReference>
<dbReference type="Pfam" id="PF03009">
    <property type="entry name" value="GDPD"/>
    <property type="match status" value="1"/>
</dbReference>
<dbReference type="SUPFAM" id="SSF51695">
    <property type="entry name" value="PLC-like phosphodiesterases"/>
    <property type="match status" value="1"/>
</dbReference>
<dbReference type="PROSITE" id="PS51704">
    <property type="entry name" value="GP_PDE"/>
    <property type="match status" value="1"/>
</dbReference>